<sequence length="185" mass="20519">MISDIRKDAEVRMEKCVEAFKTQISKVRTGRASPSLLDGIVVEYYGTLTPLRQLASVTVEDSRTLKINVFDRSMGPAVEKAIMASDLGLNPSSAGTDICVPLPPLTEERRKDLTKIVRGEAEQARVAVRNVRRDANDKVKALLKDKAISEDDDRRSQEEVQKMTDAAIKKVDAALADKEAELMQF</sequence>
<feature type="chain" id="PRO_0000167532" description="Ribosome-recycling factor">
    <location>
        <begin position="1"/>
        <end position="185"/>
    </location>
</feature>
<dbReference type="EMBL" id="CP000026">
    <property type="protein sequence ID" value="AAV76255.1"/>
    <property type="molecule type" value="Genomic_DNA"/>
</dbReference>
<dbReference type="RefSeq" id="WP_000622421.1">
    <property type="nucleotide sequence ID" value="NC_006511.1"/>
</dbReference>
<dbReference type="SMR" id="Q5PD60"/>
<dbReference type="KEGG" id="spt:SPA0226"/>
<dbReference type="HOGENOM" id="CLU_073981_2_1_6"/>
<dbReference type="Proteomes" id="UP000008185">
    <property type="component" value="Chromosome"/>
</dbReference>
<dbReference type="GO" id="GO:0005829">
    <property type="term" value="C:cytosol"/>
    <property type="evidence" value="ECO:0007669"/>
    <property type="project" value="GOC"/>
</dbReference>
<dbReference type="GO" id="GO:0043023">
    <property type="term" value="F:ribosomal large subunit binding"/>
    <property type="evidence" value="ECO:0007669"/>
    <property type="project" value="TreeGrafter"/>
</dbReference>
<dbReference type="GO" id="GO:0002184">
    <property type="term" value="P:cytoplasmic translational termination"/>
    <property type="evidence" value="ECO:0007669"/>
    <property type="project" value="TreeGrafter"/>
</dbReference>
<dbReference type="CDD" id="cd00520">
    <property type="entry name" value="RRF"/>
    <property type="match status" value="1"/>
</dbReference>
<dbReference type="FunFam" id="1.10.132.20:FF:000001">
    <property type="entry name" value="Ribosome-recycling factor"/>
    <property type="match status" value="1"/>
</dbReference>
<dbReference type="FunFam" id="3.30.1360.40:FF:000001">
    <property type="entry name" value="Ribosome-recycling factor"/>
    <property type="match status" value="1"/>
</dbReference>
<dbReference type="Gene3D" id="3.30.1360.40">
    <property type="match status" value="1"/>
</dbReference>
<dbReference type="Gene3D" id="1.10.132.20">
    <property type="entry name" value="Ribosome-recycling factor"/>
    <property type="match status" value="1"/>
</dbReference>
<dbReference type="HAMAP" id="MF_00040">
    <property type="entry name" value="RRF"/>
    <property type="match status" value="1"/>
</dbReference>
<dbReference type="InterPro" id="IPR002661">
    <property type="entry name" value="Ribosome_recyc_fac"/>
</dbReference>
<dbReference type="InterPro" id="IPR023584">
    <property type="entry name" value="Ribosome_recyc_fac_dom"/>
</dbReference>
<dbReference type="InterPro" id="IPR036191">
    <property type="entry name" value="RRF_sf"/>
</dbReference>
<dbReference type="NCBIfam" id="TIGR00496">
    <property type="entry name" value="frr"/>
    <property type="match status" value="1"/>
</dbReference>
<dbReference type="PANTHER" id="PTHR20982:SF3">
    <property type="entry name" value="MITOCHONDRIAL RIBOSOME RECYCLING FACTOR PSEUDO 1"/>
    <property type="match status" value="1"/>
</dbReference>
<dbReference type="PANTHER" id="PTHR20982">
    <property type="entry name" value="RIBOSOME RECYCLING FACTOR"/>
    <property type="match status" value="1"/>
</dbReference>
<dbReference type="Pfam" id="PF01765">
    <property type="entry name" value="RRF"/>
    <property type="match status" value="1"/>
</dbReference>
<dbReference type="SUPFAM" id="SSF55194">
    <property type="entry name" value="Ribosome recycling factor, RRF"/>
    <property type="match status" value="1"/>
</dbReference>
<organism>
    <name type="scientific">Salmonella paratyphi A (strain ATCC 9150 / SARB42)</name>
    <dbReference type="NCBI Taxonomy" id="295319"/>
    <lineage>
        <taxon>Bacteria</taxon>
        <taxon>Pseudomonadati</taxon>
        <taxon>Pseudomonadota</taxon>
        <taxon>Gammaproteobacteria</taxon>
        <taxon>Enterobacterales</taxon>
        <taxon>Enterobacteriaceae</taxon>
        <taxon>Salmonella</taxon>
    </lineage>
</organism>
<evidence type="ECO:0000255" key="1">
    <source>
        <dbReference type="HAMAP-Rule" id="MF_00040"/>
    </source>
</evidence>
<reference key="1">
    <citation type="journal article" date="2004" name="Nat. Genet.">
        <title>Comparison of genome degradation in Paratyphi A and Typhi, human-restricted serovars of Salmonella enterica that cause typhoid.</title>
        <authorList>
            <person name="McClelland M."/>
            <person name="Sanderson K.E."/>
            <person name="Clifton S.W."/>
            <person name="Latreille P."/>
            <person name="Porwollik S."/>
            <person name="Sabo A."/>
            <person name="Meyer R."/>
            <person name="Bieri T."/>
            <person name="Ozersky P."/>
            <person name="McLellan M."/>
            <person name="Harkins C.R."/>
            <person name="Wang C."/>
            <person name="Nguyen C."/>
            <person name="Berghoff A."/>
            <person name="Elliott G."/>
            <person name="Kohlberg S."/>
            <person name="Strong C."/>
            <person name="Du F."/>
            <person name="Carter J."/>
            <person name="Kremizki C."/>
            <person name="Layman D."/>
            <person name="Leonard S."/>
            <person name="Sun H."/>
            <person name="Fulton L."/>
            <person name="Nash W."/>
            <person name="Miner T."/>
            <person name="Minx P."/>
            <person name="Delehaunty K."/>
            <person name="Fronick C."/>
            <person name="Magrini V."/>
            <person name="Nhan M."/>
            <person name="Warren W."/>
            <person name="Florea L."/>
            <person name="Spieth J."/>
            <person name="Wilson R.K."/>
        </authorList>
    </citation>
    <scope>NUCLEOTIDE SEQUENCE [LARGE SCALE GENOMIC DNA]</scope>
    <source>
        <strain>ATCC 9150 / SARB42</strain>
    </source>
</reference>
<accession>Q5PD60</accession>
<comment type="function">
    <text evidence="1">Responsible for the release of ribosomes from messenger RNA at the termination of protein biosynthesis. May increase the efficiency of translation by recycling ribosomes from one round of translation to another.</text>
</comment>
<comment type="subcellular location">
    <subcellularLocation>
        <location evidence="1">Cytoplasm</location>
    </subcellularLocation>
</comment>
<comment type="similarity">
    <text evidence="1">Belongs to the RRF family.</text>
</comment>
<keyword id="KW-0963">Cytoplasm</keyword>
<keyword id="KW-0648">Protein biosynthesis</keyword>
<gene>
    <name evidence="1" type="primary">frr</name>
    <name type="ordered locus">SPA0226</name>
</gene>
<proteinExistence type="inferred from homology"/>
<protein>
    <recommendedName>
        <fullName evidence="1">Ribosome-recycling factor</fullName>
        <shortName evidence="1">RRF</shortName>
    </recommendedName>
    <alternativeName>
        <fullName evidence="1">Ribosome-releasing factor</fullName>
    </alternativeName>
</protein>
<name>RRF_SALPA</name>